<name>RDGC_PSEE4</name>
<reference key="1">
    <citation type="journal article" date="2006" name="Nat. Biotechnol.">
        <title>Complete genome sequence of the entomopathogenic and metabolically versatile soil bacterium Pseudomonas entomophila.</title>
        <authorList>
            <person name="Vodovar N."/>
            <person name="Vallenet D."/>
            <person name="Cruveiller S."/>
            <person name="Rouy Z."/>
            <person name="Barbe V."/>
            <person name="Acosta C."/>
            <person name="Cattolico L."/>
            <person name="Jubin C."/>
            <person name="Lajus A."/>
            <person name="Segurens B."/>
            <person name="Vacherie B."/>
            <person name="Wincker P."/>
            <person name="Weissenbach J."/>
            <person name="Lemaitre B."/>
            <person name="Medigue C."/>
            <person name="Boccard F."/>
        </authorList>
    </citation>
    <scope>NUCLEOTIDE SEQUENCE [LARGE SCALE GENOMIC DNA]</scope>
    <source>
        <strain>L48</strain>
    </source>
</reference>
<accession>Q1IDH6</accession>
<comment type="function">
    <text evidence="1">May be involved in recombination.</text>
</comment>
<comment type="subcellular location">
    <subcellularLocation>
        <location evidence="1">Cytoplasm</location>
        <location evidence="1">Nucleoid</location>
    </subcellularLocation>
</comment>
<comment type="similarity">
    <text evidence="1">Belongs to the RdgC family.</text>
</comment>
<protein>
    <recommendedName>
        <fullName evidence="1">Recombination-associated protein RdgC</fullName>
    </recommendedName>
</protein>
<gene>
    <name evidence="1" type="primary">rdgC</name>
    <name type="ordered locus">PSEEN1411</name>
</gene>
<keyword id="KW-0963">Cytoplasm</keyword>
<keyword id="KW-0233">DNA recombination</keyword>
<evidence type="ECO:0000255" key="1">
    <source>
        <dbReference type="HAMAP-Rule" id="MF_00194"/>
    </source>
</evidence>
<dbReference type="EMBL" id="CT573326">
    <property type="protein sequence ID" value="CAK14283.1"/>
    <property type="molecule type" value="Genomic_DNA"/>
</dbReference>
<dbReference type="RefSeq" id="WP_011532699.1">
    <property type="nucleotide sequence ID" value="NC_008027.1"/>
</dbReference>
<dbReference type="SMR" id="Q1IDH6"/>
<dbReference type="STRING" id="384676.PSEEN1411"/>
<dbReference type="GeneID" id="32804669"/>
<dbReference type="KEGG" id="pen:PSEEN1411"/>
<dbReference type="eggNOG" id="COG2974">
    <property type="taxonomic scope" value="Bacteria"/>
</dbReference>
<dbReference type="HOGENOM" id="CLU_052038_1_1_6"/>
<dbReference type="OrthoDB" id="5290530at2"/>
<dbReference type="Proteomes" id="UP000000658">
    <property type="component" value="Chromosome"/>
</dbReference>
<dbReference type="GO" id="GO:0043590">
    <property type="term" value="C:bacterial nucleoid"/>
    <property type="evidence" value="ECO:0007669"/>
    <property type="project" value="TreeGrafter"/>
</dbReference>
<dbReference type="GO" id="GO:0005737">
    <property type="term" value="C:cytoplasm"/>
    <property type="evidence" value="ECO:0007669"/>
    <property type="project" value="UniProtKB-UniRule"/>
</dbReference>
<dbReference type="GO" id="GO:0003690">
    <property type="term" value="F:double-stranded DNA binding"/>
    <property type="evidence" value="ECO:0007669"/>
    <property type="project" value="TreeGrafter"/>
</dbReference>
<dbReference type="GO" id="GO:0006310">
    <property type="term" value="P:DNA recombination"/>
    <property type="evidence" value="ECO:0007669"/>
    <property type="project" value="UniProtKB-UniRule"/>
</dbReference>
<dbReference type="GO" id="GO:0000018">
    <property type="term" value="P:regulation of DNA recombination"/>
    <property type="evidence" value="ECO:0007669"/>
    <property type="project" value="TreeGrafter"/>
</dbReference>
<dbReference type="HAMAP" id="MF_00194">
    <property type="entry name" value="RdgC"/>
    <property type="match status" value="1"/>
</dbReference>
<dbReference type="InterPro" id="IPR007476">
    <property type="entry name" value="RdgC"/>
</dbReference>
<dbReference type="NCBIfam" id="NF001461">
    <property type="entry name" value="PRK00321.1-2"/>
    <property type="match status" value="1"/>
</dbReference>
<dbReference type="NCBIfam" id="NF001462">
    <property type="entry name" value="PRK00321.1-3"/>
    <property type="match status" value="1"/>
</dbReference>
<dbReference type="NCBIfam" id="NF001464">
    <property type="entry name" value="PRK00321.1-5"/>
    <property type="match status" value="1"/>
</dbReference>
<dbReference type="PANTHER" id="PTHR38103">
    <property type="entry name" value="RECOMBINATION-ASSOCIATED PROTEIN RDGC"/>
    <property type="match status" value="1"/>
</dbReference>
<dbReference type="PANTHER" id="PTHR38103:SF1">
    <property type="entry name" value="RECOMBINATION-ASSOCIATED PROTEIN RDGC"/>
    <property type="match status" value="1"/>
</dbReference>
<dbReference type="Pfam" id="PF04381">
    <property type="entry name" value="RdgC"/>
    <property type="match status" value="1"/>
</dbReference>
<feature type="chain" id="PRO_1000021219" description="Recombination-associated protein RdgC">
    <location>
        <begin position="1"/>
        <end position="306"/>
    </location>
</feature>
<organism>
    <name type="scientific">Pseudomonas entomophila (strain L48)</name>
    <dbReference type="NCBI Taxonomy" id="384676"/>
    <lineage>
        <taxon>Bacteria</taxon>
        <taxon>Pseudomonadati</taxon>
        <taxon>Pseudomonadota</taxon>
        <taxon>Gammaproteobacteria</taxon>
        <taxon>Pseudomonadales</taxon>
        <taxon>Pseudomonadaceae</taxon>
        <taxon>Pseudomonas</taxon>
    </lineage>
</organism>
<proteinExistence type="inferred from homology"/>
<sequence length="306" mass="34192">MWFKNLLTYRLTQDVPFEPEALEAALASKPARPCASQELTTYGFVAPFGKGADAPLVHVSGEFLLIAARKEERILPSSVVNDAVKEKVEEIETEQMRKVYKKERDQIKDEIIQAFLPRAFIRRSMIFAAIAPRLGLILVNSASAKRAEDLLSTLREVMGSLPVRPVTVKIAPAATMTDWVKSQHAAEGFYVLDECELRDTGEDGGIVRCKRQDLTGEEIQLHLSTGKVVTQLALAWQDKLSFVLDDKTVIKRLKFEELLQEQAEQDGGDEAQQQFDASFTLMMMTFTEFLPALFEALGGEEIPQGV</sequence>